<proteinExistence type="inferred from homology"/>
<organism>
    <name type="scientific">Prochlorococcus marinus (strain NATL2A)</name>
    <dbReference type="NCBI Taxonomy" id="59920"/>
    <lineage>
        <taxon>Bacteria</taxon>
        <taxon>Bacillati</taxon>
        <taxon>Cyanobacteriota</taxon>
        <taxon>Cyanophyceae</taxon>
        <taxon>Synechococcales</taxon>
        <taxon>Prochlorococcaceae</taxon>
        <taxon>Prochlorococcus</taxon>
    </lineage>
</organism>
<gene>
    <name evidence="1" type="primary">uvrC</name>
    <name type="ordered locus">PMN2A_0328</name>
</gene>
<feature type="chain" id="PRO_0000227460" description="UvrABC system protein C">
    <location>
        <begin position="1"/>
        <end position="640"/>
    </location>
</feature>
<feature type="domain" description="GIY-YIG" evidence="1">
    <location>
        <begin position="22"/>
        <end position="101"/>
    </location>
</feature>
<feature type="domain" description="UVR" evidence="1">
    <location>
        <begin position="211"/>
        <end position="246"/>
    </location>
</feature>
<name>UVRC_PROMT</name>
<comment type="function">
    <text evidence="1">The UvrABC repair system catalyzes the recognition and processing of DNA lesions. UvrC both incises the 5' and 3' sides of the lesion. The N-terminal half is responsible for the 3' incision and the C-terminal half is responsible for the 5' incision.</text>
</comment>
<comment type="subunit">
    <text evidence="1">Interacts with UvrB in an incision complex.</text>
</comment>
<comment type="subcellular location">
    <subcellularLocation>
        <location evidence="1">Cytoplasm</location>
    </subcellularLocation>
</comment>
<comment type="similarity">
    <text evidence="1">Belongs to the UvrC family.</text>
</comment>
<keyword id="KW-0963">Cytoplasm</keyword>
<keyword id="KW-0227">DNA damage</keyword>
<keyword id="KW-0228">DNA excision</keyword>
<keyword id="KW-0234">DNA repair</keyword>
<keyword id="KW-0267">Excision nuclease</keyword>
<keyword id="KW-1185">Reference proteome</keyword>
<keyword id="KW-0742">SOS response</keyword>
<protein>
    <recommendedName>
        <fullName evidence="1">UvrABC system protein C</fullName>
        <shortName evidence="1">Protein UvrC</shortName>
    </recommendedName>
    <alternativeName>
        <fullName evidence="1">Excinuclease ABC subunit C</fullName>
    </alternativeName>
</protein>
<dbReference type="EMBL" id="CP000095">
    <property type="protein sequence ID" value="AAZ57820.1"/>
    <property type="molecule type" value="Genomic_DNA"/>
</dbReference>
<dbReference type="RefSeq" id="WP_011293862.1">
    <property type="nucleotide sequence ID" value="NC_007335.2"/>
</dbReference>
<dbReference type="SMR" id="Q46L08"/>
<dbReference type="STRING" id="59920.PMN2A_0328"/>
<dbReference type="KEGG" id="pmn:PMN2A_0328"/>
<dbReference type="HOGENOM" id="CLU_014841_3_2_3"/>
<dbReference type="OrthoDB" id="9804933at2"/>
<dbReference type="PhylomeDB" id="Q46L08"/>
<dbReference type="Proteomes" id="UP000002535">
    <property type="component" value="Chromosome"/>
</dbReference>
<dbReference type="GO" id="GO:0005737">
    <property type="term" value="C:cytoplasm"/>
    <property type="evidence" value="ECO:0007669"/>
    <property type="project" value="UniProtKB-SubCell"/>
</dbReference>
<dbReference type="GO" id="GO:0009380">
    <property type="term" value="C:excinuclease repair complex"/>
    <property type="evidence" value="ECO:0007669"/>
    <property type="project" value="InterPro"/>
</dbReference>
<dbReference type="GO" id="GO:0003677">
    <property type="term" value="F:DNA binding"/>
    <property type="evidence" value="ECO:0007669"/>
    <property type="project" value="UniProtKB-UniRule"/>
</dbReference>
<dbReference type="GO" id="GO:0009381">
    <property type="term" value="F:excinuclease ABC activity"/>
    <property type="evidence" value="ECO:0007669"/>
    <property type="project" value="UniProtKB-UniRule"/>
</dbReference>
<dbReference type="GO" id="GO:0006289">
    <property type="term" value="P:nucleotide-excision repair"/>
    <property type="evidence" value="ECO:0007669"/>
    <property type="project" value="UniProtKB-UniRule"/>
</dbReference>
<dbReference type="GO" id="GO:0009432">
    <property type="term" value="P:SOS response"/>
    <property type="evidence" value="ECO:0007669"/>
    <property type="project" value="UniProtKB-UniRule"/>
</dbReference>
<dbReference type="CDD" id="cd10434">
    <property type="entry name" value="GIY-YIG_UvrC_Cho"/>
    <property type="match status" value="1"/>
</dbReference>
<dbReference type="FunFam" id="3.40.1440.10:FF:000001">
    <property type="entry name" value="UvrABC system protein C"/>
    <property type="match status" value="1"/>
</dbReference>
<dbReference type="Gene3D" id="1.10.150.20">
    <property type="entry name" value="5' to 3' exonuclease, C-terminal subdomain"/>
    <property type="match status" value="1"/>
</dbReference>
<dbReference type="Gene3D" id="3.40.1440.10">
    <property type="entry name" value="GIY-YIG endonuclease"/>
    <property type="match status" value="1"/>
</dbReference>
<dbReference type="Gene3D" id="3.30.420.340">
    <property type="entry name" value="UvrC, RNAse H endonuclease domain"/>
    <property type="match status" value="1"/>
</dbReference>
<dbReference type="HAMAP" id="MF_00203">
    <property type="entry name" value="UvrC"/>
    <property type="match status" value="1"/>
</dbReference>
<dbReference type="InterPro" id="IPR000305">
    <property type="entry name" value="GIY-YIG_endonuc"/>
</dbReference>
<dbReference type="InterPro" id="IPR035901">
    <property type="entry name" value="GIY-YIG_endonuc_sf"/>
</dbReference>
<dbReference type="InterPro" id="IPR047296">
    <property type="entry name" value="GIY-YIG_UvrC_Cho"/>
</dbReference>
<dbReference type="InterPro" id="IPR003583">
    <property type="entry name" value="Hlx-hairpin-Hlx_DNA-bd_motif"/>
</dbReference>
<dbReference type="InterPro" id="IPR010994">
    <property type="entry name" value="RuvA_2-like"/>
</dbReference>
<dbReference type="InterPro" id="IPR001943">
    <property type="entry name" value="UVR_dom"/>
</dbReference>
<dbReference type="InterPro" id="IPR036876">
    <property type="entry name" value="UVR_dom_sf"/>
</dbReference>
<dbReference type="InterPro" id="IPR050066">
    <property type="entry name" value="UvrABC_protein_C"/>
</dbReference>
<dbReference type="InterPro" id="IPR004791">
    <property type="entry name" value="UvrC"/>
</dbReference>
<dbReference type="InterPro" id="IPR001162">
    <property type="entry name" value="UvrC_RNase_H_dom"/>
</dbReference>
<dbReference type="InterPro" id="IPR038476">
    <property type="entry name" value="UvrC_RNase_H_dom_sf"/>
</dbReference>
<dbReference type="NCBIfam" id="NF001824">
    <property type="entry name" value="PRK00558.1-5"/>
    <property type="match status" value="1"/>
</dbReference>
<dbReference type="NCBIfam" id="TIGR00194">
    <property type="entry name" value="uvrC"/>
    <property type="match status" value="1"/>
</dbReference>
<dbReference type="PANTHER" id="PTHR30562:SF1">
    <property type="entry name" value="UVRABC SYSTEM PROTEIN C"/>
    <property type="match status" value="1"/>
</dbReference>
<dbReference type="PANTHER" id="PTHR30562">
    <property type="entry name" value="UVRC/OXIDOREDUCTASE"/>
    <property type="match status" value="1"/>
</dbReference>
<dbReference type="Pfam" id="PF01541">
    <property type="entry name" value="GIY-YIG"/>
    <property type="match status" value="1"/>
</dbReference>
<dbReference type="Pfam" id="PF14520">
    <property type="entry name" value="HHH_5"/>
    <property type="match status" value="1"/>
</dbReference>
<dbReference type="Pfam" id="PF22920">
    <property type="entry name" value="UvrC_RNaseH"/>
    <property type="match status" value="1"/>
</dbReference>
<dbReference type="Pfam" id="PF08459">
    <property type="entry name" value="UvrC_RNaseH_dom"/>
    <property type="match status" value="1"/>
</dbReference>
<dbReference type="SMART" id="SM00465">
    <property type="entry name" value="GIYc"/>
    <property type="match status" value="1"/>
</dbReference>
<dbReference type="SMART" id="SM00278">
    <property type="entry name" value="HhH1"/>
    <property type="match status" value="2"/>
</dbReference>
<dbReference type="SUPFAM" id="SSF46600">
    <property type="entry name" value="C-terminal UvrC-binding domain of UvrB"/>
    <property type="match status" value="1"/>
</dbReference>
<dbReference type="SUPFAM" id="SSF82771">
    <property type="entry name" value="GIY-YIG endonuclease"/>
    <property type="match status" value="1"/>
</dbReference>
<dbReference type="SUPFAM" id="SSF47781">
    <property type="entry name" value="RuvA domain 2-like"/>
    <property type="match status" value="1"/>
</dbReference>
<dbReference type="PROSITE" id="PS50164">
    <property type="entry name" value="GIY_YIG"/>
    <property type="match status" value="1"/>
</dbReference>
<dbReference type="PROSITE" id="PS50151">
    <property type="entry name" value="UVR"/>
    <property type="match status" value="1"/>
</dbReference>
<dbReference type="PROSITE" id="PS50165">
    <property type="entry name" value="UVRC"/>
    <property type="match status" value="1"/>
</dbReference>
<sequence>MELTPLIRDKSRLSDFLKDIPNDPGCYLMKDGEDRLLYVGKSKKLRNRVRSYFRSGNELSPRISLMVRQVADIELIVTDNESEALTLESNLIKSHQPYFNVLLKDDKKYPYVCITWGDKYPRIFLTRKRRQRQLKDKYYGPYVDVYLLRQTLFSIKKLFPLRQRRIPLYKDRTCLNYSIGRCPGVCQEEISSEDYKNTLKRVEMIFQGRTDELRILLEKQMISFSESLKFEEAGSVRDQLKGIDRLYESQKMIIPDSSVCRDIIAMASEENISSVQIFQMRSGKLIGRLGYFSDNSNFNSSQILQQVIENHYSNVDPVEIPSEILVQHQLVNNILISDWLSEIKKQKVNINVPKRSRKAEIIKLVEKNANLELQRIKQSQDKNLVELDDLTNILDLENIPKRIECYDISHIQGSDAVASQVVFIDGIAARQHYRRYKIKSPNIKIGHSDDFESMAEVITRRFRRWARFKEEGGDIDALLSNESSVLDNLNLNDWPDLVVIDGGKGQLSSVVAALEGLKLDQNLNVISLAKKKEEVFIPKVKQSLVTESNQPGMLLLRRLRDEAHRFAITFHRQKRSQRMKRSQLNEIPGLGPQRIKLLLEHFRSIEAIQMATFSELSSTPGLGRSTAVVIRNYFHPDKNI</sequence>
<accession>Q46L08</accession>
<reference key="1">
    <citation type="journal article" date="2007" name="PLoS Genet.">
        <title>Patterns and implications of gene gain and loss in the evolution of Prochlorococcus.</title>
        <authorList>
            <person name="Kettler G.C."/>
            <person name="Martiny A.C."/>
            <person name="Huang K."/>
            <person name="Zucker J."/>
            <person name="Coleman M.L."/>
            <person name="Rodrigue S."/>
            <person name="Chen F."/>
            <person name="Lapidus A."/>
            <person name="Ferriera S."/>
            <person name="Johnson J."/>
            <person name="Steglich C."/>
            <person name="Church G.M."/>
            <person name="Richardson P."/>
            <person name="Chisholm S.W."/>
        </authorList>
    </citation>
    <scope>NUCLEOTIDE SEQUENCE [LARGE SCALE GENOMIC DNA]</scope>
    <source>
        <strain>NATL2A</strain>
    </source>
</reference>
<evidence type="ECO:0000255" key="1">
    <source>
        <dbReference type="HAMAP-Rule" id="MF_00203"/>
    </source>
</evidence>